<sequence>MEEDDHAGKHDALSALSQWLWSKPLGQHNADLDDDEEVTTGQEELFLPEEQVRARHLFSQKTISREVPAEQSRSGRVYQTARHSLMECSRPTMSIKSQWSFWSSSPKPLPKIPVPSLTSWTHTVNSTPFPQLSTSSGSQSPGKGRLQRLTSTERNGTTLPRTNSGSSTKAMVLHR</sequence>
<name>MVP_TYYVF</name>
<accession>P09511</accession>
<protein>
    <recommendedName>
        <fullName>Movement protein</fullName>
        <shortName>MP</shortName>
    </recommendedName>
    <alternativeName>
        <fullName>20 kDa protein</fullName>
    </alternativeName>
</protein>
<organism>
    <name type="scientific">Turnip yellows virus (isolate FL-1)</name>
    <name type="common">TuYV</name>
    <name type="synonym">BWYV-FL1</name>
    <dbReference type="NCBI Taxonomy" id="12043"/>
    <lineage>
        <taxon>Viruses</taxon>
        <taxon>Riboviria</taxon>
        <taxon>Orthornavirae</taxon>
        <taxon>Pisuviricota</taxon>
        <taxon>Pisoniviricetes</taxon>
        <taxon>Sobelivirales</taxon>
        <taxon>Solemoviridae</taxon>
        <taxon>Polerovirus</taxon>
        <taxon>Beet western yellows virus</taxon>
    </lineage>
</organism>
<comment type="function">
    <text evidence="1 3 4">Together with movement protein P3a, facilitates long-distance movement of virions in host (PubMed:25946037). Transports viral genome to neighboring plant cells directly through plasmosdesmata, without any budding (Probable). The movement protein allows efficient cell to cell propagation, by bypassing the host cell wall barrier (Probable). Binds ssRNA (By similarity).</text>
</comment>
<comment type="subunit">
    <text evidence="1">Homodimer.</text>
</comment>
<comment type="subcellular location">
    <subcellularLocation>
        <location evidence="3">Host cell junction</location>
        <location evidence="3">Host plasmodesma</location>
    </subcellularLocation>
    <subcellularLocation>
        <location evidence="3">Host Golgi apparatus</location>
    </subcellularLocation>
</comment>
<comment type="domain">
    <text evidence="1">The N-terminus is involved in homodimerization (By similarity). The C-terminus binds ssRNA (By similarity). The C-terminus is phosphorylated (By similarity).</text>
</comment>
<comment type="PTM">
    <text evidence="1">Phosphorylated.</text>
</comment>
<comment type="miscellaneous">
    <text evidence="4">Poleroviruses are transmitted by aphids directly into phloem tissue. The virus replicates most efficiently in phloem companion cells and then moves through plasmodesmata between companion cells or into sieve elements for long distance transport.</text>
</comment>
<comment type="similarity">
    <text evidence="4">Belongs to the polerovirus movement protein family.</text>
</comment>
<reference key="1">
    <citation type="journal article" date="1988" name="Nucleic Acids Res.">
        <title>Nucleotide sequence of beet western yellows virus RNA.</title>
        <authorList>
            <person name="Veidt I."/>
            <person name="Lot H."/>
            <person name="Leiser M."/>
            <person name="Scheidecker D."/>
            <person name="Guilley H."/>
            <person name="Richards K.E."/>
            <person name="Jonard G."/>
        </authorList>
    </citation>
    <scope>NUCLEOTIDE SEQUENCE [GENOMIC RNA]</scope>
</reference>
<reference key="2">
    <citation type="journal article" date="2015" name="PLoS Pathog.">
        <title>Discovery of a small non-AUG-initiated ORF in Poleroviruses and Luteoviruses that is required for long-distance movement.</title>
        <authorList>
            <person name="Smirnova E."/>
            <person name="Firth A.E."/>
            <person name="Miller W.A."/>
            <person name="Scheidecker D."/>
            <person name="Brault V."/>
            <person name="Reinbold C."/>
            <person name="Rakotondrafara A.M."/>
            <person name="Chung B.Y."/>
            <person name="Ziegler-Graff V."/>
        </authorList>
    </citation>
    <scope>FUNCTION</scope>
    <scope>SUBCELLULAR LOCATION</scope>
</reference>
<organismHost>
    <name type="scientific">Beta vulgaris</name>
    <name type="common">Sugar beet</name>
    <dbReference type="NCBI Taxonomy" id="161934"/>
</organismHost>
<organismHost>
    <name type="scientific">Brassica napus subsp. rapifera</name>
    <dbReference type="NCBI Taxonomy" id="3709"/>
</organismHost>
<organismHost>
    <name type="scientific">Brassica napus var. napus</name>
    <dbReference type="NCBI Taxonomy" id="138011"/>
</organismHost>
<organismHost>
    <name type="scientific">Brassica nigra</name>
    <name type="common">Black mustard</name>
    <name type="synonym">Sinapis nigra</name>
    <dbReference type="NCBI Taxonomy" id="3710"/>
</organismHost>
<organismHost>
    <name type="scientific">Brassica oleracea var. botrytis</name>
    <name type="common">Cauliflower</name>
    <dbReference type="NCBI Taxonomy" id="3715"/>
</organismHost>
<organismHost>
    <name type="scientific">Brassica oleracea var. capitata</name>
    <name type="common">Cabbage</name>
    <dbReference type="NCBI Taxonomy" id="3716"/>
</organismHost>
<organismHost>
    <name type="scientific">Brassica rapa subsp. rapa</name>
    <name type="common">Turnip</name>
    <dbReference type="NCBI Taxonomy" id="51350"/>
</organismHost>
<organismHost>
    <name type="scientific">Capsicum annuum</name>
    <name type="common">Capsicum pepper</name>
    <dbReference type="NCBI Taxonomy" id="4072"/>
</organismHost>
<organismHost>
    <name type="scientific">Cicer arietinum</name>
    <name type="common">Chickpea</name>
    <name type="synonym">Garbanzo</name>
    <dbReference type="NCBI Taxonomy" id="3827"/>
</organismHost>
<organismHost>
    <name type="scientific">Citrullus lanatus</name>
    <name type="common">Watermelon</name>
    <name type="synonym">Citrullus vulgaris</name>
    <dbReference type="NCBI Taxonomy" id="3654"/>
</organismHost>
<organismHost>
    <name type="scientific">Crambe hispanica subsp. abyssinica</name>
    <name type="common">Abyssinian kale</name>
    <name type="synonym">Crambe abyssinica</name>
    <dbReference type="NCBI Taxonomy" id="3721"/>
</organismHost>
<organismHost>
    <name type="scientific">Cucumis sativus</name>
    <name type="common">Cucumber</name>
    <dbReference type="NCBI Taxonomy" id="3659"/>
</organismHost>
<organismHost>
    <name type="scientific">Cucurbita pepo</name>
    <name type="common">Vegetable marrow</name>
    <name type="synonym">Summer squash</name>
    <dbReference type="NCBI Taxonomy" id="3663"/>
</organismHost>
<organismHost>
    <name type="scientific">Glycine max</name>
    <name type="common">Soybean</name>
    <name type="synonym">Glycine hispida</name>
    <dbReference type="NCBI Taxonomy" id="3847"/>
</organismHost>
<organismHost>
    <name type="scientific">Helianthus annuus</name>
    <name type="common">Common sunflower</name>
    <dbReference type="NCBI Taxonomy" id="4232"/>
</organismHost>
<organismHost>
    <name type="scientific">Lactuca sativa</name>
    <name type="common">Garden lettuce</name>
    <dbReference type="NCBI Taxonomy" id="4236"/>
</organismHost>
<organismHost>
    <name type="scientific">Phlox drummondii</name>
    <name type="common">Annual phlox</name>
    <dbReference type="NCBI Taxonomy" id="103529"/>
</organismHost>
<organismHost>
    <name type="scientific">Pisum sativum</name>
    <name type="common">Garden pea</name>
    <name type="synonym">Lathyrus oleraceus</name>
    <dbReference type="NCBI Taxonomy" id="3888"/>
</organismHost>
<organismHost>
    <name type="scientific">Raphanus sativus</name>
    <name type="common">Radish</name>
    <name type="synonym">Raphanus raphanistrum var. sativus</name>
    <dbReference type="NCBI Taxonomy" id="3726"/>
</organismHost>
<organismHost>
    <name type="scientific">Solanum lycopersicum</name>
    <name type="common">Tomato</name>
    <name type="synonym">Lycopersicon esculentum</name>
    <dbReference type="NCBI Taxonomy" id="4081"/>
</organismHost>
<organismHost>
    <name type="scientific">Spinacia oleracea</name>
    <name type="common">Spinach</name>
    <dbReference type="NCBI Taxonomy" id="3562"/>
</organismHost>
<organismHost>
    <name type="scientific">Trifolium subterraneum</name>
    <name type="common">Subterranean clover</name>
    <dbReference type="NCBI Taxonomy" id="3900"/>
</organismHost>
<organismHost>
    <name type="scientific">Vicia faba</name>
    <name type="common">Broad bean</name>
    <name type="synonym">Faba vulgaris</name>
    <dbReference type="NCBI Taxonomy" id="3906"/>
</organismHost>
<evidence type="ECO:0000250" key="1">
    <source>
        <dbReference type="UniProtKB" id="P10471"/>
    </source>
</evidence>
<evidence type="ECO:0000256" key="2">
    <source>
        <dbReference type="SAM" id="MobiDB-lite"/>
    </source>
</evidence>
<evidence type="ECO:0000269" key="3">
    <source>
    </source>
</evidence>
<evidence type="ECO:0000305" key="4"/>
<keyword id="KW-1031">Host cell junction</keyword>
<keyword id="KW-1040">Host Golgi apparatus</keyword>
<keyword id="KW-0597">Phosphoprotein</keyword>
<keyword id="KW-1185">Reference proteome</keyword>
<keyword id="KW-0813">Transport</keyword>
<keyword id="KW-0916">Viral movement protein</keyword>
<gene>
    <name type="ORF">ORF4</name>
</gene>
<feature type="chain" id="PRO_0000222416" description="Movement protein">
    <location>
        <begin position="1"/>
        <end position="175"/>
    </location>
</feature>
<feature type="region of interest" description="Homodimerization" evidence="1">
    <location>
        <begin position="30"/>
        <end position="47"/>
    </location>
</feature>
<feature type="region of interest" description="RNA-binding" evidence="1">
    <location>
        <begin position="50"/>
        <end position="156"/>
    </location>
</feature>
<feature type="region of interest" description="Disordered" evidence="2">
    <location>
        <begin position="116"/>
        <end position="175"/>
    </location>
</feature>
<feature type="compositionally biased region" description="Polar residues" evidence="2">
    <location>
        <begin position="116"/>
        <end position="141"/>
    </location>
</feature>
<feature type="compositionally biased region" description="Polar residues" evidence="2">
    <location>
        <begin position="148"/>
        <end position="169"/>
    </location>
</feature>
<feature type="modified residue" description="Phosphoserine" evidence="1">
    <location>
        <position position="64"/>
    </location>
</feature>
<feature type="modified residue" description="Phosphoserine" evidence="1">
    <location>
        <position position="133"/>
    </location>
</feature>
<dbReference type="EMBL" id="X13063">
    <property type="protein sequence ID" value="CAA31466.1"/>
    <property type="molecule type" value="Genomic_RNA"/>
</dbReference>
<dbReference type="PIR" id="S01942">
    <property type="entry name" value="GNVQFL"/>
</dbReference>
<dbReference type="RefSeq" id="NP_620489.1">
    <property type="nucleotide sequence ID" value="NC_003743.1"/>
</dbReference>
<dbReference type="KEGG" id="vg:940482"/>
<dbReference type="Proteomes" id="UP000007545">
    <property type="component" value="Segment"/>
</dbReference>
<dbReference type="GO" id="GO:0044177">
    <property type="term" value="C:host cell Golgi apparatus"/>
    <property type="evidence" value="ECO:0007669"/>
    <property type="project" value="UniProtKB-SubCell"/>
</dbReference>
<dbReference type="GO" id="GO:0044219">
    <property type="term" value="C:host cell plasmodesma"/>
    <property type="evidence" value="ECO:0007669"/>
    <property type="project" value="UniProtKB-SubCell"/>
</dbReference>
<dbReference type="GO" id="GO:0046740">
    <property type="term" value="P:transport of virus in host, cell to cell"/>
    <property type="evidence" value="ECO:0007669"/>
    <property type="project" value="UniProtKB-KW"/>
</dbReference>
<dbReference type="InterPro" id="IPR001964">
    <property type="entry name" value="Luteo_VPG"/>
</dbReference>
<dbReference type="Pfam" id="PF01659">
    <property type="entry name" value="Luteo_Vpg"/>
    <property type="match status" value="1"/>
</dbReference>
<dbReference type="PRINTS" id="PR00912">
    <property type="entry name" value="LVIRUSORF5"/>
</dbReference>
<proteinExistence type="inferred from homology"/>